<sequence>MSEEKNDALVGEVNTDNADNQVWLIKVPKFLSESWQKIGQGEIGQIHIKGGDNISLSYGPDVGQEFQLITTANTLDNQPLKIFSEDKDGALALEGNIGLRCDIKIDVESPQYRDLMKSRHTKYNTKTRMTQVIDESELFTPTLFDANKVKVSTVGITQKKKSTDKKEKLPEDEVLDLIFSAFRAEKHLDLKTLESFTEQPKNHLKTILEKVCILNKRGPYHHLYELKPEFRDKDNSKDEKK</sequence>
<protein>
    <recommendedName>
        <fullName>General transcription factor IIF subunit 2</fullName>
    </recommendedName>
    <alternativeName>
        <fullName>Transcription initiation factor IIF subunit beta</fullName>
        <shortName>TFIIF-beta</shortName>
    </alternativeName>
</protein>
<accession>Q54KT7</accession>
<evidence type="ECO:0000250" key="1"/>
<evidence type="ECO:0000250" key="2">
    <source>
        <dbReference type="UniProtKB" id="P13984"/>
    </source>
</evidence>
<evidence type="ECO:0000305" key="3"/>
<reference key="1">
    <citation type="journal article" date="2005" name="Nature">
        <title>The genome of the social amoeba Dictyostelium discoideum.</title>
        <authorList>
            <person name="Eichinger L."/>
            <person name="Pachebat J.A."/>
            <person name="Gloeckner G."/>
            <person name="Rajandream M.A."/>
            <person name="Sucgang R."/>
            <person name="Berriman M."/>
            <person name="Song J."/>
            <person name="Olsen R."/>
            <person name="Szafranski K."/>
            <person name="Xu Q."/>
            <person name="Tunggal B."/>
            <person name="Kummerfeld S."/>
            <person name="Madera M."/>
            <person name="Konfortov B.A."/>
            <person name="Rivero F."/>
            <person name="Bankier A.T."/>
            <person name="Lehmann R."/>
            <person name="Hamlin N."/>
            <person name="Davies R."/>
            <person name="Gaudet P."/>
            <person name="Fey P."/>
            <person name="Pilcher K."/>
            <person name="Chen G."/>
            <person name="Saunders D."/>
            <person name="Sodergren E.J."/>
            <person name="Davis P."/>
            <person name="Kerhornou A."/>
            <person name="Nie X."/>
            <person name="Hall N."/>
            <person name="Anjard C."/>
            <person name="Hemphill L."/>
            <person name="Bason N."/>
            <person name="Farbrother P."/>
            <person name="Desany B."/>
            <person name="Just E."/>
            <person name="Morio T."/>
            <person name="Rost R."/>
            <person name="Churcher C.M."/>
            <person name="Cooper J."/>
            <person name="Haydock S."/>
            <person name="van Driessche N."/>
            <person name="Cronin A."/>
            <person name="Goodhead I."/>
            <person name="Muzny D.M."/>
            <person name="Mourier T."/>
            <person name="Pain A."/>
            <person name="Lu M."/>
            <person name="Harper D."/>
            <person name="Lindsay R."/>
            <person name="Hauser H."/>
            <person name="James K.D."/>
            <person name="Quiles M."/>
            <person name="Madan Babu M."/>
            <person name="Saito T."/>
            <person name="Buchrieser C."/>
            <person name="Wardroper A."/>
            <person name="Felder M."/>
            <person name="Thangavelu M."/>
            <person name="Johnson D."/>
            <person name="Knights A."/>
            <person name="Loulseged H."/>
            <person name="Mungall K.L."/>
            <person name="Oliver K."/>
            <person name="Price C."/>
            <person name="Quail M.A."/>
            <person name="Urushihara H."/>
            <person name="Hernandez J."/>
            <person name="Rabbinowitsch E."/>
            <person name="Steffen D."/>
            <person name="Sanders M."/>
            <person name="Ma J."/>
            <person name="Kohara Y."/>
            <person name="Sharp S."/>
            <person name="Simmonds M.N."/>
            <person name="Spiegler S."/>
            <person name="Tivey A."/>
            <person name="Sugano S."/>
            <person name="White B."/>
            <person name="Walker D."/>
            <person name="Woodward J.R."/>
            <person name="Winckler T."/>
            <person name="Tanaka Y."/>
            <person name="Shaulsky G."/>
            <person name="Schleicher M."/>
            <person name="Weinstock G.M."/>
            <person name="Rosenthal A."/>
            <person name="Cox E.C."/>
            <person name="Chisholm R.L."/>
            <person name="Gibbs R.A."/>
            <person name="Loomis W.F."/>
            <person name="Platzer M."/>
            <person name="Kay R.R."/>
            <person name="Williams J.G."/>
            <person name="Dear P.H."/>
            <person name="Noegel A.A."/>
            <person name="Barrell B.G."/>
            <person name="Kuspa A."/>
        </authorList>
    </citation>
    <scope>NUCLEOTIDE SEQUENCE [LARGE SCALE GENOMIC DNA]</scope>
    <source>
        <strain>AX4</strain>
    </source>
</reference>
<dbReference type="EMBL" id="AAFI02000098">
    <property type="protein sequence ID" value="EAL63840.1"/>
    <property type="status" value="ALT_SEQ"/>
    <property type="molecule type" value="Genomic_DNA"/>
</dbReference>
<dbReference type="RefSeq" id="XP_637343.1">
    <property type="nucleotide sequence ID" value="XM_632251.1"/>
</dbReference>
<dbReference type="SMR" id="Q54KT7"/>
<dbReference type="FunCoup" id="Q54KT7">
    <property type="interactions" value="363"/>
</dbReference>
<dbReference type="STRING" id="44689.Q54KT7"/>
<dbReference type="PaxDb" id="44689-DDB0231010"/>
<dbReference type="EnsemblProtists" id="EAL63840">
    <property type="protein sequence ID" value="EAL63840"/>
    <property type="gene ID" value="DDB_G0287131"/>
</dbReference>
<dbReference type="GeneID" id="8625965"/>
<dbReference type="KEGG" id="ddi:DDB_G0287131"/>
<dbReference type="dictyBase" id="DDB_G0287131">
    <property type="gene designation" value="gtf2f2"/>
</dbReference>
<dbReference type="VEuPathDB" id="AmoebaDB:DDB_G0287131"/>
<dbReference type="eggNOG" id="KOG2905">
    <property type="taxonomic scope" value="Eukaryota"/>
</dbReference>
<dbReference type="InParanoid" id="Q54KT7"/>
<dbReference type="Reactome" id="R-DDI-113418">
    <property type="pathway name" value="Formation of the Early Elongation Complex"/>
</dbReference>
<dbReference type="Reactome" id="R-DDI-674695">
    <property type="pathway name" value="RNA Polymerase II Pre-transcription Events"/>
</dbReference>
<dbReference type="Reactome" id="R-DDI-6796648">
    <property type="pathway name" value="TP53 Regulates Transcription of DNA Repair Genes"/>
</dbReference>
<dbReference type="Reactome" id="R-DDI-6807505">
    <property type="pathway name" value="RNA polymerase II transcribes snRNA genes"/>
</dbReference>
<dbReference type="Reactome" id="R-DDI-72086">
    <property type="pathway name" value="mRNA Capping"/>
</dbReference>
<dbReference type="Reactome" id="R-DDI-72163">
    <property type="pathway name" value="mRNA Splicing - Major Pathway"/>
</dbReference>
<dbReference type="Reactome" id="R-DDI-72203">
    <property type="pathway name" value="Processing of Capped Intron-Containing Pre-mRNA"/>
</dbReference>
<dbReference type="Reactome" id="R-DDI-73776">
    <property type="pathway name" value="RNA Polymerase II Promoter Escape"/>
</dbReference>
<dbReference type="Reactome" id="R-DDI-73779">
    <property type="pathway name" value="RNA Polymerase II Transcription Pre-Initiation And Promoter Opening"/>
</dbReference>
<dbReference type="Reactome" id="R-DDI-75953">
    <property type="pathway name" value="RNA Polymerase II Transcription Initiation"/>
</dbReference>
<dbReference type="Reactome" id="R-DDI-76042">
    <property type="pathway name" value="RNA Polymerase II Transcription Initiation And Promoter Clearance"/>
</dbReference>
<dbReference type="Reactome" id="R-DDI-77075">
    <property type="pathway name" value="RNA Pol II CTD phosphorylation and interaction with CE"/>
</dbReference>
<dbReference type="Reactome" id="R-DDI-9018519">
    <property type="pathway name" value="Estrogen-dependent gene expression"/>
</dbReference>
<dbReference type="PRO" id="PR:Q54KT7"/>
<dbReference type="Proteomes" id="UP000002195">
    <property type="component" value="Chromosome 4"/>
</dbReference>
<dbReference type="GO" id="GO:0005674">
    <property type="term" value="C:transcription factor TFIIF complex"/>
    <property type="evidence" value="ECO:0000250"/>
    <property type="project" value="dictyBase"/>
</dbReference>
<dbReference type="GO" id="GO:0003677">
    <property type="term" value="F:DNA binding"/>
    <property type="evidence" value="ECO:0007669"/>
    <property type="project" value="UniProtKB-KW"/>
</dbReference>
<dbReference type="GO" id="GO:0006366">
    <property type="term" value="P:transcription by RNA polymerase II"/>
    <property type="evidence" value="ECO:0000250"/>
    <property type="project" value="UniProtKB"/>
</dbReference>
<dbReference type="GO" id="GO:0006367">
    <property type="term" value="P:transcription initiation at RNA polymerase II promoter"/>
    <property type="evidence" value="ECO:0000250"/>
    <property type="project" value="dictyBase"/>
</dbReference>
<dbReference type="CDD" id="cd07980">
    <property type="entry name" value="TFIIF_beta"/>
    <property type="match status" value="1"/>
</dbReference>
<dbReference type="FunFam" id="1.10.10.10:FF:000035">
    <property type="entry name" value="General transcription factor IIF subunit 2"/>
    <property type="match status" value="1"/>
</dbReference>
<dbReference type="Gene3D" id="1.10.10.10">
    <property type="entry name" value="Winged helix-like DNA-binding domain superfamily/Winged helix DNA-binding domain"/>
    <property type="match status" value="1"/>
</dbReference>
<dbReference type="InterPro" id="IPR003196">
    <property type="entry name" value="TFIIF_beta"/>
</dbReference>
<dbReference type="InterPro" id="IPR040450">
    <property type="entry name" value="TFIIF_beta_HTH"/>
</dbReference>
<dbReference type="InterPro" id="IPR040504">
    <property type="entry name" value="TFIIF_beta_N"/>
</dbReference>
<dbReference type="InterPro" id="IPR011039">
    <property type="entry name" value="TFIIF_interaction"/>
</dbReference>
<dbReference type="InterPro" id="IPR036388">
    <property type="entry name" value="WH-like_DNA-bd_sf"/>
</dbReference>
<dbReference type="InterPro" id="IPR036390">
    <property type="entry name" value="WH_DNA-bd_sf"/>
</dbReference>
<dbReference type="PANTHER" id="PTHR10445">
    <property type="entry name" value="GENERAL TRANSCRIPTION FACTOR IIF SUBUNIT 2"/>
    <property type="match status" value="1"/>
</dbReference>
<dbReference type="PANTHER" id="PTHR10445:SF0">
    <property type="entry name" value="GENERAL TRANSCRIPTION FACTOR IIF SUBUNIT 2"/>
    <property type="match status" value="1"/>
</dbReference>
<dbReference type="Pfam" id="PF02270">
    <property type="entry name" value="TFIIF_beta"/>
    <property type="match status" value="1"/>
</dbReference>
<dbReference type="Pfam" id="PF17683">
    <property type="entry name" value="TFIIF_beta_N"/>
    <property type="match status" value="1"/>
</dbReference>
<dbReference type="SUPFAM" id="SSF50916">
    <property type="entry name" value="Rap30/74 interaction domains"/>
    <property type="match status" value="1"/>
</dbReference>
<dbReference type="SUPFAM" id="SSF46785">
    <property type="entry name" value="Winged helix' DNA-binding domain"/>
    <property type="match status" value="1"/>
</dbReference>
<keyword id="KW-0238">DNA-binding</keyword>
<keyword id="KW-0539">Nucleus</keyword>
<keyword id="KW-1185">Reference proteome</keyword>
<keyword id="KW-0804">Transcription</keyword>
<keyword id="KW-0805">Transcription regulation</keyword>
<proteinExistence type="inferred from homology"/>
<comment type="function">
    <text evidence="2">TFIIF is a general transcription initiation factor that binds to RNA polymerase II and helps to recruit it to the initiation complex in collaboration with TFIIB.</text>
</comment>
<comment type="subunit">
    <text evidence="1">Heterodimer of an alpha and a beta subunit.</text>
</comment>
<comment type="subcellular location">
    <subcellularLocation>
        <location evidence="1">Nucleus</location>
    </subcellularLocation>
</comment>
<comment type="similarity">
    <text evidence="3">Belongs to the TFIIF beta subunit family.</text>
</comment>
<comment type="sequence caution" evidence="3">
    <conflict type="erroneous gene model prediction">
        <sequence resource="EMBL-CDS" id="EAL63840"/>
    </conflict>
</comment>
<gene>
    <name type="primary">gtf2f2</name>
    <name type="synonym">tfiif2</name>
    <name type="ORF">DDB_G0287131</name>
</gene>
<name>T2FB_DICDI</name>
<feature type="chain" id="PRO_0000330920" description="General transcription factor IIF subunit 2">
    <location>
        <begin position="1"/>
        <end position="241"/>
    </location>
</feature>
<organism>
    <name type="scientific">Dictyostelium discoideum</name>
    <name type="common">Social amoeba</name>
    <dbReference type="NCBI Taxonomy" id="44689"/>
    <lineage>
        <taxon>Eukaryota</taxon>
        <taxon>Amoebozoa</taxon>
        <taxon>Evosea</taxon>
        <taxon>Eumycetozoa</taxon>
        <taxon>Dictyostelia</taxon>
        <taxon>Dictyosteliales</taxon>
        <taxon>Dictyosteliaceae</taxon>
        <taxon>Dictyostelium</taxon>
    </lineage>
</organism>